<reference key="1">
    <citation type="journal article" date="2004" name="Proc. Natl. Acad. Sci. U.S.A.">
        <title>The louse-borne human pathogen Bartonella quintana is a genomic derivative of the zoonotic agent Bartonella henselae.</title>
        <authorList>
            <person name="Alsmark U.C.M."/>
            <person name="Frank A.C."/>
            <person name="Karlberg E.O."/>
            <person name="Legault B.-A."/>
            <person name="Ardell D.H."/>
            <person name="Canbaeck B."/>
            <person name="Eriksson A.-S."/>
            <person name="Naeslund A.K."/>
            <person name="Handley S.A."/>
            <person name="Huvet M."/>
            <person name="La Scola B."/>
            <person name="Holmberg M."/>
            <person name="Andersson S.G.E."/>
        </authorList>
    </citation>
    <scope>NUCLEOTIDE SEQUENCE [LARGE SCALE GENOMIC DNA]</scope>
    <source>
        <strain>ATCC 49882 / DSM 28221 / CCUG 30454 / Houston 1</strain>
    </source>
</reference>
<name>RL35_BARHE</name>
<organism>
    <name type="scientific">Bartonella henselae (strain ATCC 49882 / DSM 28221 / CCUG 30454 / Houston 1)</name>
    <name type="common">Rochalimaea henselae</name>
    <dbReference type="NCBI Taxonomy" id="283166"/>
    <lineage>
        <taxon>Bacteria</taxon>
        <taxon>Pseudomonadati</taxon>
        <taxon>Pseudomonadota</taxon>
        <taxon>Alphaproteobacteria</taxon>
        <taxon>Hyphomicrobiales</taxon>
        <taxon>Bartonellaceae</taxon>
        <taxon>Bartonella</taxon>
    </lineage>
</organism>
<dbReference type="EMBL" id="BX897699">
    <property type="protein sequence ID" value="CAF26898.1"/>
    <property type="molecule type" value="Genomic_DNA"/>
</dbReference>
<dbReference type="RefSeq" id="WP_011180043.1">
    <property type="nucleotide sequence ID" value="NZ_LRIJ02000001.1"/>
</dbReference>
<dbReference type="SMR" id="Q6G5E5"/>
<dbReference type="PaxDb" id="283166-BH00820"/>
<dbReference type="EnsemblBacteria" id="CAF26898">
    <property type="protein sequence ID" value="CAF26898"/>
    <property type="gene ID" value="BH00820"/>
</dbReference>
<dbReference type="GeneID" id="92986368"/>
<dbReference type="KEGG" id="bhe:BH00820"/>
<dbReference type="eggNOG" id="COG0291">
    <property type="taxonomic scope" value="Bacteria"/>
</dbReference>
<dbReference type="OrthoDB" id="9804851at2"/>
<dbReference type="Proteomes" id="UP000000421">
    <property type="component" value="Chromosome"/>
</dbReference>
<dbReference type="GO" id="GO:0022625">
    <property type="term" value="C:cytosolic large ribosomal subunit"/>
    <property type="evidence" value="ECO:0007669"/>
    <property type="project" value="TreeGrafter"/>
</dbReference>
<dbReference type="GO" id="GO:0003735">
    <property type="term" value="F:structural constituent of ribosome"/>
    <property type="evidence" value="ECO:0007669"/>
    <property type="project" value="InterPro"/>
</dbReference>
<dbReference type="GO" id="GO:0006412">
    <property type="term" value="P:translation"/>
    <property type="evidence" value="ECO:0007669"/>
    <property type="project" value="UniProtKB-UniRule"/>
</dbReference>
<dbReference type="FunFam" id="4.10.410.60:FF:000001">
    <property type="entry name" value="50S ribosomal protein L35"/>
    <property type="match status" value="1"/>
</dbReference>
<dbReference type="Gene3D" id="4.10.410.60">
    <property type="match status" value="1"/>
</dbReference>
<dbReference type="HAMAP" id="MF_00514">
    <property type="entry name" value="Ribosomal_bL35"/>
    <property type="match status" value="1"/>
</dbReference>
<dbReference type="InterPro" id="IPR001706">
    <property type="entry name" value="Ribosomal_bL35"/>
</dbReference>
<dbReference type="InterPro" id="IPR021137">
    <property type="entry name" value="Ribosomal_bL35-like"/>
</dbReference>
<dbReference type="InterPro" id="IPR018265">
    <property type="entry name" value="Ribosomal_bL35_CS"/>
</dbReference>
<dbReference type="InterPro" id="IPR037229">
    <property type="entry name" value="Ribosomal_bL35_sf"/>
</dbReference>
<dbReference type="NCBIfam" id="TIGR00001">
    <property type="entry name" value="rpmI_bact"/>
    <property type="match status" value="1"/>
</dbReference>
<dbReference type="PANTHER" id="PTHR33343">
    <property type="entry name" value="54S RIBOSOMAL PROTEIN BL35M"/>
    <property type="match status" value="1"/>
</dbReference>
<dbReference type="PANTHER" id="PTHR33343:SF1">
    <property type="entry name" value="LARGE RIBOSOMAL SUBUNIT PROTEIN BL35M"/>
    <property type="match status" value="1"/>
</dbReference>
<dbReference type="Pfam" id="PF01632">
    <property type="entry name" value="Ribosomal_L35p"/>
    <property type="match status" value="1"/>
</dbReference>
<dbReference type="PRINTS" id="PR00064">
    <property type="entry name" value="RIBOSOMALL35"/>
</dbReference>
<dbReference type="SUPFAM" id="SSF143034">
    <property type="entry name" value="L35p-like"/>
    <property type="match status" value="1"/>
</dbReference>
<dbReference type="PROSITE" id="PS00936">
    <property type="entry name" value="RIBOSOMAL_L35"/>
    <property type="match status" value="1"/>
</dbReference>
<proteinExistence type="inferred from homology"/>
<evidence type="ECO:0000255" key="1">
    <source>
        <dbReference type="HAMAP-Rule" id="MF_00514"/>
    </source>
</evidence>
<evidence type="ECO:0000305" key="2"/>
<protein>
    <recommendedName>
        <fullName evidence="1">Large ribosomal subunit protein bL35</fullName>
    </recommendedName>
    <alternativeName>
        <fullName evidence="2">50S ribosomal protein L35</fullName>
    </alternativeName>
</protein>
<feature type="chain" id="PRO_0000177328" description="Large ribosomal subunit protein bL35">
    <location>
        <begin position="1"/>
        <end position="67"/>
    </location>
</feature>
<comment type="similarity">
    <text evidence="1">Belongs to the bacterial ribosomal protein bL35 family.</text>
</comment>
<sequence length="67" mass="7470">MPKMKTKSSAKKRFKITASGKVKVAAAGKRHGMIKRSNKFIRDARGTMVLSEQDAKKVIQHYLPNGL</sequence>
<keyword id="KW-0687">Ribonucleoprotein</keyword>
<keyword id="KW-0689">Ribosomal protein</keyword>
<accession>Q6G5E5</accession>
<gene>
    <name evidence="1" type="primary">rpmI</name>
    <name type="ordered locus">BH00820</name>
</gene>